<evidence type="ECO:0000255" key="1">
    <source>
        <dbReference type="HAMAP-Rule" id="MF_02013"/>
    </source>
</evidence>
<evidence type="ECO:0000305" key="2"/>
<gene>
    <name evidence="1" type="primary">zapA</name>
    <name type="ordered locus">BcerKBAB4_4383</name>
</gene>
<protein>
    <recommendedName>
        <fullName evidence="1">Cell division protein ZapA</fullName>
    </recommendedName>
    <alternativeName>
        <fullName evidence="1">Z ring-associated protein ZapA</fullName>
    </alternativeName>
</protein>
<sequence length="89" mass="10106">MSQQKGNKSRINVEIYGQQYSVVGDESTSHIRMVAAIVDDKMRELNAKNPSLDTSRLAVLTAVNVIHDYIKLKEEHEKLKESMTQKGME</sequence>
<proteinExistence type="inferred from homology"/>
<dbReference type="EMBL" id="CP000903">
    <property type="protein sequence ID" value="ABY45542.1"/>
    <property type="status" value="ALT_INIT"/>
    <property type="molecule type" value="Genomic_DNA"/>
</dbReference>
<dbReference type="RefSeq" id="WP_002088902.1">
    <property type="nucleotide sequence ID" value="NC_010184.1"/>
</dbReference>
<dbReference type="SMR" id="A9VJL5"/>
<dbReference type="KEGG" id="bwe:BcerKBAB4_4383"/>
<dbReference type="eggNOG" id="COG3027">
    <property type="taxonomic scope" value="Bacteria"/>
</dbReference>
<dbReference type="HOGENOM" id="CLU_116623_4_0_9"/>
<dbReference type="Proteomes" id="UP000002154">
    <property type="component" value="Chromosome"/>
</dbReference>
<dbReference type="GO" id="GO:0032153">
    <property type="term" value="C:cell division site"/>
    <property type="evidence" value="ECO:0007669"/>
    <property type="project" value="TreeGrafter"/>
</dbReference>
<dbReference type="GO" id="GO:0030428">
    <property type="term" value="C:cell septum"/>
    <property type="evidence" value="ECO:0007669"/>
    <property type="project" value="TreeGrafter"/>
</dbReference>
<dbReference type="GO" id="GO:0005829">
    <property type="term" value="C:cytosol"/>
    <property type="evidence" value="ECO:0007669"/>
    <property type="project" value="TreeGrafter"/>
</dbReference>
<dbReference type="GO" id="GO:0005886">
    <property type="term" value="C:plasma membrane"/>
    <property type="evidence" value="ECO:0007669"/>
    <property type="project" value="UniProtKB-UniRule"/>
</dbReference>
<dbReference type="GO" id="GO:0000917">
    <property type="term" value="P:division septum assembly"/>
    <property type="evidence" value="ECO:0007669"/>
    <property type="project" value="UniProtKB-KW"/>
</dbReference>
<dbReference type="GO" id="GO:0043093">
    <property type="term" value="P:FtsZ-dependent cytokinesis"/>
    <property type="evidence" value="ECO:0007669"/>
    <property type="project" value="TreeGrafter"/>
</dbReference>
<dbReference type="GO" id="GO:0000921">
    <property type="term" value="P:septin ring assembly"/>
    <property type="evidence" value="ECO:0007669"/>
    <property type="project" value="TreeGrafter"/>
</dbReference>
<dbReference type="Gene3D" id="6.10.250.790">
    <property type="match status" value="1"/>
</dbReference>
<dbReference type="HAMAP" id="MF_02013">
    <property type="entry name" value="ZapA_type2"/>
    <property type="match status" value="1"/>
</dbReference>
<dbReference type="InterPro" id="IPR053712">
    <property type="entry name" value="Bac_CellDiv_Activator"/>
</dbReference>
<dbReference type="InterPro" id="IPR007838">
    <property type="entry name" value="Cell_div_ZapA-like"/>
</dbReference>
<dbReference type="InterPro" id="IPR036192">
    <property type="entry name" value="Cell_div_ZapA-like_sf"/>
</dbReference>
<dbReference type="InterPro" id="IPR023688">
    <property type="entry name" value="Cell_div_ZapA_firmicutes"/>
</dbReference>
<dbReference type="NCBIfam" id="NF010724">
    <property type="entry name" value="PRK14126.1"/>
    <property type="match status" value="1"/>
</dbReference>
<dbReference type="PANTHER" id="PTHR34981">
    <property type="entry name" value="CELL DIVISION PROTEIN ZAPA"/>
    <property type="match status" value="1"/>
</dbReference>
<dbReference type="PANTHER" id="PTHR34981:SF1">
    <property type="entry name" value="CELL DIVISION PROTEIN ZAPA"/>
    <property type="match status" value="1"/>
</dbReference>
<dbReference type="Pfam" id="PF05164">
    <property type="entry name" value="ZapA"/>
    <property type="match status" value="1"/>
</dbReference>
<dbReference type="SUPFAM" id="SSF102829">
    <property type="entry name" value="Cell division protein ZapA-like"/>
    <property type="match status" value="1"/>
</dbReference>
<name>ZAPA_BACMK</name>
<reference key="1">
    <citation type="journal article" date="2008" name="Chem. Biol. Interact.">
        <title>Extending the Bacillus cereus group genomics to putative food-borne pathogens of different toxicity.</title>
        <authorList>
            <person name="Lapidus A."/>
            <person name="Goltsman E."/>
            <person name="Auger S."/>
            <person name="Galleron N."/>
            <person name="Segurens B."/>
            <person name="Dossat C."/>
            <person name="Land M.L."/>
            <person name="Broussolle V."/>
            <person name="Brillard J."/>
            <person name="Guinebretiere M.-H."/>
            <person name="Sanchis V."/>
            <person name="Nguen-the C."/>
            <person name="Lereclus D."/>
            <person name="Richardson P."/>
            <person name="Wincker P."/>
            <person name="Weissenbach J."/>
            <person name="Ehrlich S.D."/>
            <person name="Sorokin A."/>
        </authorList>
    </citation>
    <scope>NUCLEOTIDE SEQUENCE [LARGE SCALE GENOMIC DNA]</scope>
    <source>
        <strain>KBAB4</strain>
    </source>
</reference>
<accession>A9VJL5</accession>
<feature type="chain" id="PRO_0000345687" description="Cell division protein ZapA">
    <location>
        <begin position="1"/>
        <end position="89"/>
    </location>
</feature>
<keyword id="KW-0131">Cell cycle</keyword>
<keyword id="KW-0132">Cell division</keyword>
<keyword id="KW-0963">Cytoplasm</keyword>
<keyword id="KW-0717">Septation</keyword>
<comment type="function">
    <text evidence="1">Activator of cell division through the inhibition of FtsZ GTPase activity, therefore promoting FtsZ assembly into bundles of protofilaments necessary for the formation of the division Z ring. It is recruited early at mid-cell but it is not essential for cell division.</text>
</comment>
<comment type="subunit">
    <text evidence="1">Homodimer. Interacts with FtsZ.</text>
</comment>
<comment type="subcellular location">
    <subcellularLocation>
        <location evidence="1">Cytoplasm</location>
    </subcellularLocation>
    <text evidence="1">Localizes at mid-cell. In sporulating cells, localizes near the cell poles.</text>
</comment>
<comment type="similarity">
    <text evidence="1">Belongs to the ZapA family. Type 2 subfamily.</text>
</comment>
<comment type="sequence caution" evidence="2">
    <conflict type="erroneous initiation">
        <sequence resource="EMBL-CDS" id="ABY45542"/>
    </conflict>
</comment>
<organism>
    <name type="scientific">Bacillus mycoides (strain KBAB4)</name>
    <name type="common">Bacillus weihenstephanensis</name>
    <dbReference type="NCBI Taxonomy" id="315730"/>
    <lineage>
        <taxon>Bacteria</taxon>
        <taxon>Bacillati</taxon>
        <taxon>Bacillota</taxon>
        <taxon>Bacilli</taxon>
        <taxon>Bacillales</taxon>
        <taxon>Bacillaceae</taxon>
        <taxon>Bacillus</taxon>
        <taxon>Bacillus cereus group</taxon>
    </lineage>
</organism>